<gene>
    <name type="primary">yehB</name>
    <name type="ordered locus">b2109</name>
    <name type="ordered locus">JW2096</name>
</gene>
<proteinExistence type="evidence at transcript level"/>
<protein>
    <recommendedName>
        <fullName>Outer membrane usher protein YehB</fullName>
    </recommendedName>
</protein>
<sequence length="826" mass="92282">MLRMTPLASAIVALLLGIEAYAAEETFDTHFMIGGMKDQQVANIRLDDNQPLPGQYDIDIYVNKQWRGKYEIIVKDNPQETCLSREVIKRLGINSDNFASGKQCLTFEQLVQGGSYTWDIGVFRLDFSVPQAWVEELESGYVPPENWERGINAFYTSYYLSQYYSDYKASGNNKSTYVRFNSGLNLLGWQLHSDASFSKTNNNPGVWKSNTLYLERGFAQLLGTLRVGDMYTSSDIFDSVRFRGVRLFRDMQMLPNSKQNFTPRVQGIAQSNALVTIEQNGFVVYQKEVPPGPFAITDLQLAGGGADLDVSVKEADGSVTTYLVPYAAVPNMLQPGVSKYDLAAGRSHIEGASKQSDFVQAGYQYGFNNLLTLYGGSMVANNYYAFTLGAGWNTRIGAISVDATKSHSKQDNGDVFDGQSYQIAYNKFVSQTSTRFGLAAWRYSSRDYRTFNDHVWANNKDNYRRDENDVYDIADYYQNDFGRKNSFSANMSQSLPEGWGSVSLSTLWRDYWGRSGSSKDYQLSYSNNLRRISYTLAASQAYDENHHEEKRFNIFISIPFDWGDDVSTPRRQIYMSNSTTFDDQGFASNNTGLSGTVGSRDQFNYGVNLSHQHQGNETTAGANLTWNAPVATVNGSYSQSSTYRQAGASVSGGIVAWSGGVNLANRLSETFAVMNAPGIKDAYVNGQKYRTTNRNGVVIYDGMTPYRENHLMLDVSQSDSEAELRGNRKIAAPYRGAVVLVNFDTDQRKPWFIKALRADGQSLTFGYEVNDIHGHNIGVVGQGSQLFIRTNEVPPSVNVAIDKQQGLSCTITFGKEIDESRNYICQ</sequence>
<evidence type="ECO:0000250" key="1"/>
<evidence type="ECO:0000255" key="2"/>
<evidence type="ECO:0000269" key="3">
    <source>
    </source>
</evidence>
<evidence type="ECO:0000305" key="4"/>
<evidence type="ECO:0000305" key="5">
    <source>
    </source>
</evidence>
<accession>P33341</accession>
<keyword id="KW-0998">Cell outer membrane</keyword>
<keyword id="KW-1015">Disulfide bond</keyword>
<keyword id="KW-1029">Fimbrium biogenesis</keyword>
<keyword id="KW-0472">Membrane</keyword>
<keyword id="KW-1185">Reference proteome</keyword>
<keyword id="KW-0732">Signal</keyword>
<keyword id="KW-0812">Transmembrane</keyword>
<keyword id="KW-1134">Transmembrane beta strand</keyword>
<keyword id="KW-0813">Transport</keyword>
<feature type="signal peptide" evidence="2">
    <location>
        <begin position="1"/>
        <end position="22"/>
    </location>
</feature>
<feature type="chain" id="PRO_0000009331" description="Outer membrane usher protein YehB">
    <location>
        <begin position="23"/>
        <end position="826"/>
    </location>
</feature>
<feature type="disulfide bond" evidence="2">
    <location>
        <begin position="809"/>
        <end position="825"/>
    </location>
</feature>
<comment type="function">
    <text evidence="3">Part of the yehABCD fimbrial operon. Could contribute to adhesion to various surfaces in specific environmental niches. Probably involved in the export and assembly of fimbrial subunits across the outer membrane.</text>
</comment>
<comment type="subcellular location">
    <subcellularLocation>
        <location evidence="1">Cell outer membrane</location>
        <topology evidence="1">Multi-pass membrane protein</topology>
    </subcellularLocation>
</comment>
<comment type="induction">
    <text evidence="3">Expression is negatively regulated by H-NS and subjected to cAMP receptor protein (CRP)-mediated catabolite repression.</text>
</comment>
<comment type="disruption phenotype">
    <text evidence="3">Deletion of the operon under classical laboratory conditions does not result in any major effect on E.coli capacity to form biofilms compared with the wild-type strain.</text>
</comment>
<comment type="miscellaneous">
    <text evidence="5">The operon is cryptic under classical laboratory conditions, but is functional when constitutively expressed.</text>
</comment>
<comment type="similarity">
    <text evidence="4">Belongs to the fimbrial export usher family.</text>
</comment>
<reference key="1">
    <citation type="submission" date="1993-10" db="EMBL/GenBank/DDBJ databases">
        <title>Automated multiplex sequencing of the E.coli genome.</title>
        <authorList>
            <person name="Richterich P."/>
            <person name="Lakey N."/>
            <person name="Gryan G."/>
            <person name="Jaehn L."/>
            <person name="Mintz L."/>
            <person name="Robison K."/>
            <person name="Church G.M."/>
        </authorList>
    </citation>
    <scope>NUCLEOTIDE SEQUENCE [LARGE SCALE GENOMIC DNA]</scope>
    <source>
        <strain>K12 / BHB2600</strain>
    </source>
</reference>
<reference key="2">
    <citation type="journal article" date="1997" name="Science">
        <title>The complete genome sequence of Escherichia coli K-12.</title>
        <authorList>
            <person name="Blattner F.R."/>
            <person name="Plunkett G. III"/>
            <person name="Bloch C.A."/>
            <person name="Perna N.T."/>
            <person name="Burland V."/>
            <person name="Riley M."/>
            <person name="Collado-Vides J."/>
            <person name="Glasner J.D."/>
            <person name="Rode C.K."/>
            <person name="Mayhew G.F."/>
            <person name="Gregor J."/>
            <person name="Davis N.W."/>
            <person name="Kirkpatrick H.A."/>
            <person name="Goeden M.A."/>
            <person name="Rose D.J."/>
            <person name="Mau B."/>
            <person name="Shao Y."/>
        </authorList>
    </citation>
    <scope>NUCLEOTIDE SEQUENCE [LARGE SCALE GENOMIC DNA]</scope>
    <source>
        <strain>K12 / MG1655 / ATCC 47076</strain>
    </source>
</reference>
<reference key="3">
    <citation type="journal article" date="2006" name="Mol. Syst. Biol.">
        <title>Highly accurate genome sequences of Escherichia coli K-12 strains MG1655 and W3110.</title>
        <authorList>
            <person name="Hayashi K."/>
            <person name="Morooka N."/>
            <person name="Yamamoto Y."/>
            <person name="Fujita K."/>
            <person name="Isono K."/>
            <person name="Choi S."/>
            <person name="Ohtsubo E."/>
            <person name="Baba T."/>
            <person name="Wanner B.L."/>
            <person name="Mori H."/>
            <person name="Horiuchi T."/>
        </authorList>
    </citation>
    <scope>NUCLEOTIDE SEQUENCE [LARGE SCALE GENOMIC DNA]</scope>
    <source>
        <strain>K12 / W3110 / ATCC 27325 / DSM 5911</strain>
    </source>
</reference>
<reference key="4">
    <citation type="journal article" date="1996" name="DNA Res.">
        <title>A 460-kb DNA sequence of the Escherichia coli K-12 genome corresponding to the 40.1-50.0 min region on the linkage map.</title>
        <authorList>
            <person name="Itoh T."/>
            <person name="Aiba H."/>
            <person name="Baba T."/>
            <person name="Fujita K."/>
            <person name="Hayashi K."/>
            <person name="Inada T."/>
            <person name="Isono K."/>
            <person name="Kasai H."/>
            <person name="Kimura S."/>
            <person name="Kitakawa M."/>
            <person name="Kitagawa M."/>
            <person name="Makino K."/>
            <person name="Miki T."/>
            <person name="Mizobuchi K."/>
            <person name="Mori H."/>
            <person name="Mori T."/>
            <person name="Motomura K."/>
            <person name="Nakade S."/>
            <person name="Nakamura Y."/>
            <person name="Nashimoto H."/>
            <person name="Nishio Y."/>
            <person name="Oshima T."/>
            <person name="Saito N."/>
            <person name="Sampei G."/>
            <person name="Seki Y."/>
            <person name="Sivasundaram S."/>
            <person name="Tagami H."/>
            <person name="Takeda J."/>
            <person name="Takemoto K."/>
            <person name="Wada C."/>
            <person name="Yamamoto Y."/>
            <person name="Horiuchi T."/>
        </authorList>
    </citation>
    <scope>NUCLEOTIDE SEQUENCE [LARGE SCALE GENOMIC DNA] OF 307-826</scope>
    <source>
        <strain>K12 / W3110 / ATCC 27325 / DSM 5911</strain>
    </source>
</reference>
<reference key="5">
    <citation type="journal article" date="2010" name="Environ. Microbiol.">
        <title>Escherichia coli K-12 possesses multiple cryptic but functional chaperone-usher fimbriae with distinct surface specificities.</title>
        <authorList>
            <person name="Korea C.G."/>
            <person name="Badouraly R."/>
            <person name="Prevost M.C."/>
            <person name="Ghigo J.M."/>
            <person name="Beloin C."/>
        </authorList>
    </citation>
    <scope>FUNCTION</scope>
    <scope>INDUCTION</scope>
    <scope>DISRUPTION PHENOTYPE</scope>
    <source>
        <strain>K12 / MG1655 / ATCC 47076</strain>
    </source>
</reference>
<dbReference type="EMBL" id="U00007">
    <property type="protein sequence ID" value="AAA60473.1"/>
    <property type="molecule type" value="Genomic_DNA"/>
</dbReference>
<dbReference type="EMBL" id="U00096">
    <property type="protein sequence ID" value="AAC75170.1"/>
    <property type="molecule type" value="Genomic_DNA"/>
</dbReference>
<dbReference type="EMBL" id="AP009048">
    <property type="protein sequence ID" value="BAA15975.2"/>
    <property type="molecule type" value="Genomic_DNA"/>
</dbReference>
<dbReference type="PIR" id="D64978">
    <property type="entry name" value="D64978"/>
</dbReference>
<dbReference type="RefSeq" id="NP_416612.1">
    <property type="nucleotide sequence ID" value="NC_000913.3"/>
</dbReference>
<dbReference type="RefSeq" id="WP_000945454.1">
    <property type="nucleotide sequence ID" value="NZ_LN832404.1"/>
</dbReference>
<dbReference type="SMR" id="P33341"/>
<dbReference type="BioGRID" id="4260435">
    <property type="interactions" value="266"/>
</dbReference>
<dbReference type="DIP" id="DIP-11896N"/>
<dbReference type="FunCoup" id="P33341">
    <property type="interactions" value="39"/>
</dbReference>
<dbReference type="IntAct" id="P33341">
    <property type="interactions" value="2"/>
</dbReference>
<dbReference type="STRING" id="511145.b2109"/>
<dbReference type="TCDB" id="1.B.11.3.11">
    <property type="family name" value="the outer membrane fimbrial usher porin (fup) family"/>
</dbReference>
<dbReference type="PaxDb" id="511145-b2109"/>
<dbReference type="EnsemblBacteria" id="AAC75170">
    <property type="protein sequence ID" value="AAC75170"/>
    <property type="gene ID" value="b2109"/>
</dbReference>
<dbReference type="GeneID" id="946617"/>
<dbReference type="KEGG" id="ecj:JW2096"/>
<dbReference type="KEGG" id="eco:b2109"/>
<dbReference type="KEGG" id="ecoc:C3026_11830"/>
<dbReference type="PATRIC" id="fig|1411691.4.peg.138"/>
<dbReference type="EchoBASE" id="EB1931"/>
<dbReference type="eggNOG" id="COG3188">
    <property type="taxonomic scope" value="Bacteria"/>
</dbReference>
<dbReference type="HOGENOM" id="CLU_009120_1_1_6"/>
<dbReference type="InParanoid" id="P33341"/>
<dbReference type="OMA" id="YCTITFK"/>
<dbReference type="OrthoDB" id="6554712at2"/>
<dbReference type="PhylomeDB" id="P33341"/>
<dbReference type="BioCyc" id="EcoCyc:EG11988-MONOMER"/>
<dbReference type="PRO" id="PR:P33341"/>
<dbReference type="Proteomes" id="UP000000625">
    <property type="component" value="Chromosome"/>
</dbReference>
<dbReference type="GO" id="GO:0009279">
    <property type="term" value="C:cell outer membrane"/>
    <property type="evidence" value="ECO:0000318"/>
    <property type="project" value="GO_Central"/>
</dbReference>
<dbReference type="GO" id="GO:0015473">
    <property type="term" value="F:fimbrial usher porin activity"/>
    <property type="evidence" value="ECO:0000318"/>
    <property type="project" value="GO_Central"/>
</dbReference>
<dbReference type="GO" id="GO:0006974">
    <property type="term" value="P:DNA damage response"/>
    <property type="evidence" value="ECO:0000270"/>
    <property type="project" value="EcoliWiki"/>
</dbReference>
<dbReference type="GO" id="GO:0009297">
    <property type="term" value="P:pilus assembly"/>
    <property type="evidence" value="ECO:0000318"/>
    <property type="project" value="GO_Central"/>
</dbReference>
<dbReference type="FunFam" id="2.60.40.2070:FF:000002">
    <property type="entry name" value="Fimbrial outer membrane usher protein"/>
    <property type="match status" value="1"/>
</dbReference>
<dbReference type="FunFam" id="3.10.20.410:FF:000003">
    <property type="entry name" value="Fimbrial outer membrane usher protein"/>
    <property type="match status" value="1"/>
</dbReference>
<dbReference type="FunFam" id="2.60.40.2610:FF:000001">
    <property type="entry name" value="Outer membrane fimbrial usher protein"/>
    <property type="match status" value="1"/>
</dbReference>
<dbReference type="FunFam" id="2.60.40.3110:FF:000001">
    <property type="entry name" value="Putative fimbrial outer membrane usher"/>
    <property type="match status" value="1"/>
</dbReference>
<dbReference type="Gene3D" id="2.60.40.2070">
    <property type="match status" value="1"/>
</dbReference>
<dbReference type="Gene3D" id="2.60.40.3110">
    <property type="match status" value="1"/>
</dbReference>
<dbReference type="Gene3D" id="3.10.20.410">
    <property type="match status" value="1"/>
</dbReference>
<dbReference type="Gene3D" id="2.60.40.2610">
    <property type="entry name" value="Outer membrane usher protein FimD, plug domain"/>
    <property type="match status" value="1"/>
</dbReference>
<dbReference type="InterPro" id="IPR000015">
    <property type="entry name" value="Fimb_usher"/>
</dbReference>
<dbReference type="InterPro" id="IPR018030">
    <property type="entry name" value="Fimbrial_membr_usher_CS"/>
</dbReference>
<dbReference type="InterPro" id="IPR042186">
    <property type="entry name" value="FimD_plug_dom"/>
</dbReference>
<dbReference type="InterPro" id="IPR025949">
    <property type="entry name" value="PapC-like_C"/>
</dbReference>
<dbReference type="InterPro" id="IPR043142">
    <property type="entry name" value="PapC-like_C_sf"/>
</dbReference>
<dbReference type="InterPro" id="IPR025885">
    <property type="entry name" value="PapC_N"/>
</dbReference>
<dbReference type="InterPro" id="IPR037224">
    <property type="entry name" value="PapC_N_sf"/>
</dbReference>
<dbReference type="NCBIfam" id="NF011763">
    <property type="entry name" value="PRK15217.1"/>
    <property type="match status" value="1"/>
</dbReference>
<dbReference type="PANTHER" id="PTHR30451">
    <property type="entry name" value="OUTER MEMBRANE USHER PROTEIN"/>
    <property type="match status" value="1"/>
</dbReference>
<dbReference type="PANTHER" id="PTHR30451:SF3">
    <property type="entry name" value="OUTER MEMBRANE USHER PROTEIN HTRE-RELATED"/>
    <property type="match status" value="1"/>
</dbReference>
<dbReference type="Pfam" id="PF13953">
    <property type="entry name" value="PapC_C"/>
    <property type="match status" value="1"/>
</dbReference>
<dbReference type="Pfam" id="PF13954">
    <property type="entry name" value="PapC_N"/>
    <property type="match status" value="1"/>
</dbReference>
<dbReference type="Pfam" id="PF00577">
    <property type="entry name" value="Usher"/>
    <property type="match status" value="1"/>
</dbReference>
<dbReference type="SUPFAM" id="SSF141729">
    <property type="entry name" value="FimD N-terminal domain-like"/>
    <property type="match status" value="1"/>
</dbReference>
<dbReference type="PROSITE" id="PS01151">
    <property type="entry name" value="FIMBRIAL_USHER"/>
    <property type="match status" value="1"/>
</dbReference>
<organism>
    <name type="scientific">Escherichia coli (strain K12)</name>
    <dbReference type="NCBI Taxonomy" id="83333"/>
    <lineage>
        <taxon>Bacteria</taxon>
        <taxon>Pseudomonadati</taxon>
        <taxon>Pseudomonadota</taxon>
        <taxon>Gammaproteobacteria</taxon>
        <taxon>Enterobacterales</taxon>
        <taxon>Enterobacteriaceae</taxon>
        <taxon>Escherichia</taxon>
    </lineage>
</organism>
<name>YEHB_ECOLI</name>